<dbReference type="EMBL" id="AM747720">
    <property type="protein sequence ID" value="CAR50737.1"/>
    <property type="molecule type" value="Genomic_DNA"/>
</dbReference>
<dbReference type="KEGG" id="bcj:BCAL0425"/>
<dbReference type="eggNOG" id="COG0759">
    <property type="taxonomic scope" value="Bacteria"/>
</dbReference>
<dbReference type="HOGENOM" id="CLU_144811_2_2_4"/>
<dbReference type="BioCyc" id="BCEN216591:G1G1V-491-MONOMER"/>
<dbReference type="Proteomes" id="UP000001035">
    <property type="component" value="Chromosome 1"/>
</dbReference>
<dbReference type="GO" id="GO:0005886">
    <property type="term" value="C:plasma membrane"/>
    <property type="evidence" value="ECO:0007669"/>
    <property type="project" value="UniProtKB-SubCell"/>
</dbReference>
<dbReference type="HAMAP" id="MF_00386">
    <property type="entry name" value="UPF0161_YidD"/>
    <property type="match status" value="1"/>
</dbReference>
<dbReference type="InterPro" id="IPR002696">
    <property type="entry name" value="Membr_insert_effic_factor_YidD"/>
</dbReference>
<dbReference type="NCBIfam" id="TIGR00278">
    <property type="entry name" value="membrane protein insertion efficiency factor YidD"/>
    <property type="match status" value="1"/>
</dbReference>
<dbReference type="PANTHER" id="PTHR33383">
    <property type="entry name" value="MEMBRANE PROTEIN INSERTION EFFICIENCY FACTOR-RELATED"/>
    <property type="match status" value="1"/>
</dbReference>
<dbReference type="PANTHER" id="PTHR33383:SF1">
    <property type="entry name" value="MEMBRANE PROTEIN INSERTION EFFICIENCY FACTOR-RELATED"/>
    <property type="match status" value="1"/>
</dbReference>
<dbReference type="Pfam" id="PF01809">
    <property type="entry name" value="YidD"/>
    <property type="match status" value="1"/>
</dbReference>
<dbReference type="SMART" id="SM01234">
    <property type="entry name" value="Haemolytic"/>
    <property type="match status" value="1"/>
</dbReference>
<feature type="chain" id="PRO_1000122622" description="Putative membrane protein insertion efficiency factor">
    <location>
        <begin position="1"/>
        <end position="88"/>
    </location>
</feature>
<feature type="region of interest" description="Disordered" evidence="2">
    <location>
        <begin position="68"/>
        <end position="88"/>
    </location>
</feature>
<feature type="compositionally biased region" description="Basic and acidic residues" evidence="2">
    <location>
        <begin position="75"/>
        <end position="88"/>
    </location>
</feature>
<protein>
    <recommendedName>
        <fullName evidence="1">Putative membrane protein insertion efficiency factor</fullName>
    </recommendedName>
</protein>
<reference key="1">
    <citation type="journal article" date="2009" name="J. Bacteriol.">
        <title>The genome of Burkholderia cenocepacia J2315, an epidemic pathogen of cystic fibrosis patients.</title>
        <authorList>
            <person name="Holden M.T."/>
            <person name="Seth-Smith H.M."/>
            <person name="Crossman L.C."/>
            <person name="Sebaihia M."/>
            <person name="Bentley S.D."/>
            <person name="Cerdeno-Tarraga A.M."/>
            <person name="Thomson N.R."/>
            <person name="Bason N."/>
            <person name="Quail M.A."/>
            <person name="Sharp S."/>
            <person name="Cherevach I."/>
            <person name="Churcher C."/>
            <person name="Goodhead I."/>
            <person name="Hauser H."/>
            <person name="Holroyd N."/>
            <person name="Mungall K."/>
            <person name="Scott P."/>
            <person name="Walker D."/>
            <person name="White B."/>
            <person name="Rose H."/>
            <person name="Iversen P."/>
            <person name="Mil-Homens D."/>
            <person name="Rocha E.P."/>
            <person name="Fialho A.M."/>
            <person name="Baldwin A."/>
            <person name="Dowson C."/>
            <person name="Barrell B.G."/>
            <person name="Govan J.R."/>
            <person name="Vandamme P."/>
            <person name="Hart C.A."/>
            <person name="Mahenthiralingam E."/>
            <person name="Parkhill J."/>
        </authorList>
    </citation>
    <scope>NUCLEOTIDE SEQUENCE [LARGE SCALE GENOMIC DNA]</scope>
    <source>
        <strain>ATCC BAA-245 / DSM 16553 / LMG 16656 / NCTC 13227 / J2315 / CF5610</strain>
    </source>
</reference>
<keyword id="KW-0997">Cell inner membrane</keyword>
<keyword id="KW-1003">Cell membrane</keyword>
<keyword id="KW-0472">Membrane</keyword>
<name>YIDD_BURCJ</name>
<comment type="function">
    <text evidence="1">Could be involved in insertion of integral membrane proteins into the membrane.</text>
</comment>
<comment type="subcellular location">
    <subcellularLocation>
        <location evidence="1">Cell inner membrane</location>
        <topology evidence="1">Peripheral membrane protein</topology>
        <orientation evidence="1">Cytoplasmic side</orientation>
    </subcellularLocation>
</comment>
<comment type="similarity">
    <text evidence="1">Belongs to the UPF0161 family.</text>
</comment>
<proteinExistence type="inferred from homology"/>
<accession>B4E7D4</accession>
<organism>
    <name type="scientific">Burkholderia cenocepacia (strain ATCC BAA-245 / DSM 16553 / LMG 16656 / NCTC 13227 / J2315 / CF5610)</name>
    <name type="common">Burkholderia cepacia (strain J2315)</name>
    <dbReference type="NCBI Taxonomy" id="216591"/>
    <lineage>
        <taxon>Bacteria</taxon>
        <taxon>Pseudomonadati</taxon>
        <taxon>Pseudomonadota</taxon>
        <taxon>Betaproteobacteria</taxon>
        <taxon>Burkholderiales</taxon>
        <taxon>Burkholderiaceae</taxon>
        <taxon>Burkholderia</taxon>
        <taxon>Burkholderia cepacia complex</taxon>
    </lineage>
</organism>
<evidence type="ECO:0000255" key="1">
    <source>
        <dbReference type="HAMAP-Rule" id="MF_00386"/>
    </source>
</evidence>
<evidence type="ECO:0000256" key="2">
    <source>
        <dbReference type="SAM" id="MobiDB-lite"/>
    </source>
</evidence>
<gene>
    <name type="ordered locus">BceJ2315_04240</name>
    <name type="ORF">BCAL0425</name>
</gene>
<sequence length="88" mass="9826">MKTVLIALLRFYKVAVSPMLGNRCRFYPSCSDYAREAIQYHGAARGTYLAVRRVCRCHPFSAGGIDLVPPPNSDTRARGEADARSHRL</sequence>